<comment type="function">
    <text evidence="1">Converts the aldose L-fucose into the corresponding ketose L-fuculose.</text>
</comment>
<comment type="catalytic activity">
    <reaction evidence="1">
        <text>L-fucose = L-fuculose</text>
        <dbReference type="Rhea" id="RHEA:17233"/>
        <dbReference type="ChEBI" id="CHEBI:2181"/>
        <dbReference type="ChEBI" id="CHEBI:17617"/>
        <dbReference type="EC" id="5.3.1.25"/>
    </reaction>
</comment>
<comment type="cofactor">
    <cofactor evidence="1">
        <name>Mn(2+)</name>
        <dbReference type="ChEBI" id="CHEBI:29035"/>
    </cofactor>
</comment>
<comment type="pathway">
    <text evidence="1">Carbohydrate degradation; L-fucose degradation; L-lactaldehyde and glycerone phosphate from L-fucose: step 1/3.</text>
</comment>
<comment type="subcellular location">
    <subcellularLocation>
        <location evidence="1">Cytoplasm</location>
    </subcellularLocation>
</comment>
<comment type="similarity">
    <text evidence="1">Belongs to the L-fucose isomerase family.</text>
</comment>
<protein>
    <recommendedName>
        <fullName evidence="1">L-fucose isomerase</fullName>
        <ecNumber evidence="1">5.3.1.25</ecNumber>
    </recommendedName>
    <alternativeName>
        <fullName evidence="1">6-deoxy-L-galactose isomerase</fullName>
    </alternativeName>
    <alternativeName>
        <fullName>FucIase</fullName>
    </alternativeName>
</protein>
<reference key="1">
    <citation type="journal article" date="2007" name="J. Bacteriol.">
        <title>Genome sequence of Avery's virulent serotype 2 strain D39 of Streptococcus pneumoniae and comparison with that of unencapsulated laboratory strain R6.</title>
        <authorList>
            <person name="Lanie J.A."/>
            <person name="Ng W.-L."/>
            <person name="Kazmierczak K.M."/>
            <person name="Andrzejewski T.M."/>
            <person name="Davidsen T.M."/>
            <person name="Wayne K.J."/>
            <person name="Tettelin H."/>
            <person name="Glass J.I."/>
            <person name="Winkler M.E."/>
        </authorList>
    </citation>
    <scope>NUCLEOTIDE SEQUENCE [LARGE SCALE GENOMIC DNA]</scope>
    <source>
        <strain>D39 / NCTC 7466</strain>
    </source>
</reference>
<proteinExistence type="inferred from homology"/>
<keyword id="KW-0119">Carbohydrate metabolism</keyword>
<keyword id="KW-0963">Cytoplasm</keyword>
<keyword id="KW-0294">Fucose metabolism</keyword>
<keyword id="KW-0413">Isomerase</keyword>
<keyword id="KW-0464">Manganese</keyword>
<keyword id="KW-0479">Metal-binding</keyword>
<keyword id="KW-1185">Reference proteome</keyword>
<organism>
    <name type="scientific">Streptococcus pneumoniae serotype 2 (strain D39 / NCTC 7466)</name>
    <dbReference type="NCBI Taxonomy" id="373153"/>
    <lineage>
        <taxon>Bacteria</taxon>
        <taxon>Bacillati</taxon>
        <taxon>Bacillota</taxon>
        <taxon>Bacilli</taxon>
        <taxon>Lactobacillales</taxon>
        <taxon>Streptococcaceae</taxon>
        <taxon>Streptococcus</taxon>
    </lineage>
</organism>
<sequence>MIQHPRIGIRPTIDGRRQGVRESLEVQTMNMAKSVADLISSTLKYPDGEPVECVISPSTIGRVPEAAASHELFKKSNVCATITVTPCWCYGSETMDMSPDIPHAIWGFNGTERPGAVYLAAVLASHAQKGIPAFGIYGRDVQEASDTAIPEDVKEKLLRYARAALATGLMRDTAYLSMGSVSMGIGGSIVNPDFFQEYLGMRNESVDMTEFTRRMDRGIYDPEEFERALKWVKENVKEGFDHNREDLVLSREEKDRQWEFVIKMFMIGRDLMVGNPRLAELGFEEEAVGHHALVAGFQGQRQWTDHFPNGDFMETFLNTQFDWNGIRKPFVFATENDSLNGVSMLFNYLLTNTPQIFADVRTYWSPEAVERVTGYTLEGRAAAGFLHLINSGSCTLDGTGQATRDGKPVMKPFWELDESEVQAMLENTDFPPANREYFRGGGFSTRFLTKGDMPVTMVRLNLLKGVGPVLQIAEGYTLELPEDVHHTLDNRTDPGWPTTWFAPRLTGKGAFKSVYDVMNNWGANHGAITYGHIGADLITLASMLRIPVNMHNVPEEDIFRPKNWSLFGTEDLESADYRACQLLGPLHK</sequence>
<name>FUCI_STRP2</name>
<evidence type="ECO:0000255" key="1">
    <source>
        <dbReference type="HAMAP-Rule" id="MF_01254"/>
    </source>
</evidence>
<dbReference type="EC" id="5.3.1.25" evidence="1"/>
<dbReference type="EMBL" id="CP000410">
    <property type="protein sequence ID" value="ABJ54752.1"/>
    <property type="molecule type" value="Genomic_DNA"/>
</dbReference>
<dbReference type="RefSeq" id="WP_000614258.1">
    <property type="nucleotide sequence ID" value="NZ_JAMLJR010000007.1"/>
</dbReference>
<dbReference type="SMR" id="Q04I16"/>
<dbReference type="PaxDb" id="373153-SPD_1986"/>
<dbReference type="KEGG" id="spd:SPD_1986"/>
<dbReference type="eggNOG" id="COG2407">
    <property type="taxonomic scope" value="Bacteria"/>
</dbReference>
<dbReference type="HOGENOM" id="CLU_033326_1_0_9"/>
<dbReference type="BioCyc" id="SPNE373153:G1G6V-2132-MONOMER"/>
<dbReference type="UniPathway" id="UPA00563">
    <property type="reaction ID" value="UER00624"/>
</dbReference>
<dbReference type="Proteomes" id="UP000001452">
    <property type="component" value="Chromosome"/>
</dbReference>
<dbReference type="GO" id="GO:0005737">
    <property type="term" value="C:cytoplasm"/>
    <property type="evidence" value="ECO:0007669"/>
    <property type="project" value="UniProtKB-SubCell"/>
</dbReference>
<dbReference type="GO" id="GO:0008790">
    <property type="term" value="F:arabinose isomerase activity"/>
    <property type="evidence" value="ECO:0007669"/>
    <property type="project" value="TreeGrafter"/>
</dbReference>
<dbReference type="GO" id="GO:0008736">
    <property type="term" value="F:L-fucose isomerase activity"/>
    <property type="evidence" value="ECO:0007669"/>
    <property type="project" value="UniProtKB-UniRule"/>
</dbReference>
<dbReference type="GO" id="GO:0030145">
    <property type="term" value="F:manganese ion binding"/>
    <property type="evidence" value="ECO:0007669"/>
    <property type="project" value="UniProtKB-UniRule"/>
</dbReference>
<dbReference type="GO" id="GO:0019571">
    <property type="term" value="P:D-arabinose catabolic process"/>
    <property type="evidence" value="ECO:0007669"/>
    <property type="project" value="TreeGrafter"/>
</dbReference>
<dbReference type="GO" id="GO:0042355">
    <property type="term" value="P:L-fucose catabolic process"/>
    <property type="evidence" value="ECO:0007669"/>
    <property type="project" value="UniProtKB-UniRule"/>
</dbReference>
<dbReference type="CDD" id="cd03556">
    <property type="entry name" value="L-fucose_isomerase"/>
    <property type="match status" value="1"/>
</dbReference>
<dbReference type="FunFam" id="3.20.14.10:FF:000001">
    <property type="entry name" value="L-fucose isomerase"/>
    <property type="match status" value="1"/>
</dbReference>
<dbReference type="FunFam" id="3.40.50.1070:FF:000001">
    <property type="entry name" value="L-fucose isomerase"/>
    <property type="match status" value="1"/>
</dbReference>
<dbReference type="Gene3D" id="3.40.50.1070">
    <property type="match status" value="1"/>
</dbReference>
<dbReference type="Gene3D" id="3.40.275.10">
    <property type="entry name" value="L-fucose Isomerase, Chain A, domain 2"/>
    <property type="match status" value="1"/>
</dbReference>
<dbReference type="Gene3D" id="3.20.14.10">
    <property type="entry name" value="L-fucose/L-arabinose isomerase, C-terminal"/>
    <property type="match status" value="1"/>
</dbReference>
<dbReference type="HAMAP" id="MF_01254">
    <property type="entry name" value="Fucose_iso"/>
    <property type="match status" value="1"/>
</dbReference>
<dbReference type="InterPro" id="IPR004216">
    <property type="entry name" value="Fuc/Ara_isomerase_C"/>
</dbReference>
<dbReference type="InterPro" id="IPR038393">
    <property type="entry name" value="Fuc_iso_dom3_sf"/>
</dbReference>
<dbReference type="InterPro" id="IPR015888">
    <property type="entry name" value="Fuc_isomerase_C"/>
</dbReference>
<dbReference type="InterPro" id="IPR038391">
    <property type="entry name" value="Fucose_iso_dom1_sf"/>
</dbReference>
<dbReference type="InterPro" id="IPR012888">
    <property type="entry name" value="Fucose_iso_N1"/>
</dbReference>
<dbReference type="InterPro" id="IPR005763">
    <property type="entry name" value="Fucose_isomerase"/>
</dbReference>
<dbReference type="InterPro" id="IPR038392">
    <property type="entry name" value="Fucose_isomerase_dom2_sf"/>
</dbReference>
<dbReference type="InterPro" id="IPR009015">
    <property type="entry name" value="Fucose_isomerase_N/cen_sf"/>
</dbReference>
<dbReference type="InterPro" id="IPR012889">
    <property type="entry name" value="Fucose_isomerase_N2"/>
</dbReference>
<dbReference type="NCBIfam" id="TIGR01089">
    <property type="entry name" value="fucI"/>
    <property type="match status" value="1"/>
</dbReference>
<dbReference type="NCBIfam" id="NF008220">
    <property type="entry name" value="PRK10991.1"/>
    <property type="match status" value="1"/>
</dbReference>
<dbReference type="PANTHER" id="PTHR37840">
    <property type="entry name" value="L-FUCOSE ISOMERASE"/>
    <property type="match status" value="1"/>
</dbReference>
<dbReference type="PANTHER" id="PTHR37840:SF1">
    <property type="entry name" value="L-FUCOSE ISOMERASE"/>
    <property type="match status" value="1"/>
</dbReference>
<dbReference type="Pfam" id="PF02952">
    <property type="entry name" value="Fucose_iso_C"/>
    <property type="match status" value="1"/>
</dbReference>
<dbReference type="Pfam" id="PF07881">
    <property type="entry name" value="Fucose_iso_N1"/>
    <property type="match status" value="1"/>
</dbReference>
<dbReference type="Pfam" id="PF07882">
    <property type="entry name" value="Fucose_iso_N2"/>
    <property type="match status" value="1"/>
</dbReference>
<dbReference type="SUPFAM" id="SSF50443">
    <property type="entry name" value="FucI/AraA C-terminal domain-like"/>
    <property type="match status" value="1"/>
</dbReference>
<dbReference type="SUPFAM" id="SSF53743">
    <property type="entry name" value="FucI/AraA N-terminal and middle domains"/>
    <property type="match status" value="1"/>
</dbReference>
<accession>Q04I16</accession>
<feature type="chain" id="PRO_1000067227" description="L-fucose isomerase">
    <location>
        <begin position="1"/>
        <end position="588"/>
    </location>
</feature>
<feature type="active site" description="Proton acceptor" evidence="1">
    <location>
        <position position="335"/>
    </location>
</feature>
<feature type="active site" description="Proton acceptor" evidence="1">
    <location>
        <position position="359"/>
    </location>
</feature>
<feature type="binding site" evidence="1">
    <location>
        <position position="335"/>
    </location>
    <ligand>
        <name>Mn(2+)</name>
        <dbReference type="ChEBI" id="CHEBI:29035"/>
    </ligand>
</feature>
<feature type="binding site" evidence="1">
    <location>
        <position position="359"/>
    </location>
    <ligand>
        <name>Mn(2+)</name>
        <dbReference type="ChEBI" id="CHEBI:29035"/>
    </ligand>
</feature>
<feature type="binding site" evidence="1">
    <location>
        <position position="525"/>
    </location>
    <ligand>
        <name>Mn(2+)</name>
        <dbReference type="ChEBI" id="CHEBI:29035"/>
    </ligand>
</feature>
<gene>
    <name evidence="1" type="primary">fucI</name>
    <name type="ordered locus">SPD_1986</name>
</gene>